<protein>
    <recommendedName>
        <fullName evidence="1">Hydrogenase maturation factor HypA</fullName>
    </recommendedName>
</protein>
<gene>
    <name evidence="1" type="primary">hypA</name>
    <name type="ordered locus">WS0796</name>
</gene>
<evidence type="ECO:0000255" key="1">
    <source>
        <dbReference type="HAMAP-Rule" id="MF_00213"/>
    </source>
</evidence>
<proteinExistence type="inferred from homology"/>
<keyword id="KW-0479">Metal-binding</keyword>
<keyword id="KW-0533">Nickel</keyword>
<keyword id="KW-1185">Reference proteome</keyword>
<keyword id="KW-0862">Zinc</keyword>
<reference key="1">
    <citation type="journal article" date="2003" name="Proc. Natl. Acad. Sci. U.S.A.">
        <title>Complete genome sequence and analysis of Wolinella succinogenes.</title>
        <authorList>
            <person name="Baar C."/>
            <person name="Eppinger M."/>
            <person name="Raddatz G."/>
            <person name="Simon J."/>
            <person name="Lanz C."/>
            <person name="Klimmek O."/>
            <person name="Nandakumar R."/>
            <person name="Gross R."/>
            <person name="Rosinus A."/>
            <person name="Keller H."/>
            <person name="Jagtap P."/>
            <person name="Linke B."/>
            <person name="Meyer F."/>
            <person name="Lederer H."/>
            <person name="Schuster S.C."/>
        </authorList>
    </citation>
    <scope>NUCLEOTIDE SEQUENCE [LARGE SCALE GENOMIC DNA]</scope>
    <source>
        <strain>ATCC 29543 / DSM 1740 / CCUG 13145 / JCM 31913 / LMG 7466 / NCTC 11488 / FDC 602W</strain>
    </source>
</reference>
<name>HYPA_WOLSU</name>
<comment type="function">
    <text evidence="1">Involved in the maturation of [NiFe] hydrogenases. Required for nickel insertion into the metal center of the hydrogenase.</text>
</comment>
<comment type="similarity">
    <text evidence="1">Belongs to the HypA/HybF family.</text>
</comment>
<feature type="chain" id="PRO_0000129056" description="Hydrogenase maturation factor HypA">
    <location>
        <begin position="1"/>
        <end position="119"/>
    </location>
</feature>
<feature type="binding site" evidence="1">
    <location>
        <position position="2"/>
    </location>
    <ligand>
        <name>Ni(2+)</name>
        <dbReference type="ChEBI" id="CHEBI:49786"/>
    </ligand>
</feature>
<feature type="binding site" evidence="1">
    <location>
        <position position="73"/>
    </location>
    <ligand>
        <name>Zn(2+)</name>
        <dbReference type="ChEBI" id="CHEBI:29105"/>
    </ligand>
</feature>
<feature type="binding site" evidence="1">
    <location>
        <position position="76"/>
    </location>
    <ligand>
        <name>Zn(2+)</name>
        <dbReference type="ChEBI" id="CHEBI:29105"/>
    </ligand>
</feature>
<feature type="binding site" evidence="1">
    <location>
        <position position="90"/>
    </location>
    <ligand>
        <name>Zn(2+)</name>
        <dbReference type="ChEBI" id="CHEBI:29105"/>
    </ligand>
</feature>
<feature type="binding site" evidence="1">
    <location>
        <position position="93"/>
    </location>
    <ligand>
        <name>Zn(2+)</name>
        <dbReference type="ChEBI" id="CHEBI:29105"/>
    </ligand>
</feature>
<sequence>MHEYSIVTALLELCENHAKSNKAKKVTKVVVALGERSGVEPQLLESAFEVFKLDSVCAESELVIETKPMKFRCRSCGAEFLPKGIDFGSCEVCKAPNPELVGGKEMHLQSLEMEAEDEG</sequence>
<dbReference type="EMBL" id="BX571659">
    <property type="protein sequence ID" value="CAE09909.1"/>
    <property type="molecule type" value="Genomic_DNA"/>
</dbReference>
<dbReference type="RefSeq" id="WP_011138706.1">
    <property type="nucleotide sequence ID" value="NC_005090.1"/>
</dbReference>
<dbReference type="SMR" id="Q7MS42"/>
<dbReference type="STRING" id="273121.WS0796"/>
<dbReference type="KEGG" id="wsu:WS0796"/>
<dbReference type="eggNOG" id="COG0375">
    <property type="taxonomic scope" value="Bacteria"/>
</dbReference>
<dbReference type="HOGENOM" id="CLU_126929_6_0_7"/>
<dbReference type="Proteomes" id="UP000000422">
    <property type="component" value="Chromosome"/>
</dbReference>
<dbReference type="GO" id="GO:0016151">
    <property type="term" value="F:nickel cation binding"/>
    <property type="evidence" value="ECO:0007669"/>
    <property type="project" value="UniProtKB-UniRule"/>
</dbReference>
<dbReference type="GO" id="GO:0008270">
    <property type="term" value="F:zinc ion binding"/>
    <property type="evidence" value="ECO:0007669"/>
    <property type="project" value="UniProtKB-UniRule"/>
</dbReference>
<dbReference type="GO" id="GO:0051604">
    <property type="term" value="P:protein maturation"/>
    <property type="evidence" value="ECO:0007669"/>
    <property type="project" value="InterPro"/>
</dbReference>
<dbReference type="GO" id="GO:0036211">
    <property type="term" value="P:protein modification process"/>
    <property type="evidence" value="ECO:0007669"/>
    <property type="project" value="UniProtKB-UniRule"/>
</dbReference>
<dbReference type="Gene3D" id="3.30.2320.80">
    <property type="match status" value="1"/>
</dbReference>
<dbReference type="HAMAP" id="MF_00213">
    <property type="entry name" value="HypA_HybF"/>
    <property type="match status" value="1"/>
</dbReference>
<dbReference type="InterPro" id="IPR000688">
    <property type="entry name" value="HypA/HybF"/>
</dbReference>
<dbReference type="NCBIfam" id="TIGR00100">
    <property type="entry name" value="hypA"/>
    <property type="match status" value="1"/>
</dbReference>
<dbReference type="NCBIfam" id="NF001839">
    <property type="entry name" value="PRK00564.1"/>
    <property type="match status" value="1"/>
</dbReference>
<dbReference type="PANTHER" id="PTHR34535">
    <property type="entry name" value="HYDROGENASE MATURATION FACTOR HYPA"/>
    <property type="match status" value="1"/>
</dbReference>
<dbReference type="PANTHER" id="PTHR34535:SF3">
    <property type="entry name" value="HYDROGENASE MATURATION FACTOR HYPA"/>
    <property type="match status" value="1"/>
</dbReference>
<dbReference type="Pfam" id="PF01155">
    <property type="entry name" value="HypA"/>
    <property type="match status" value="1"/>
</dbReference>
<dbReference type="PIRSF" id="PIRSF004761">
    <property type="entry name" value="Hydrgn_mat_HypA"/>
    <property type="match status" value="1"/>
</dbReference>
<organism>
    <name type="scientific">Wolinella succinogenes (strain ATCC 29543 / DSM 1740 / CCUG 13145 / JCM 31913 / LMG 7466 / NCTC 11488 / FDC 602W)</name>
    <name type="common">Vibrio succinogenes</name>
    <dbReference type="NCBI Taxonomy" id="273121"/>
    <lineage>
        <taxon>Bacteria</taxon>
        <taxon>Pseudomonadati</taxon>
        <taxon>Campylobacterota</taxon>
        <taxon>Epsilonproteobacteria</taxon>
        <taxon>Campylobacterales</taxon>
        <taxon>Helicobacteraceae</taxon>
        <taxon>Wolinella</taxon>
    </lineage>
</organism>
<accession>Q7MS42</accession>